<evidence type="ECO:0000255" key="1">
    <source>
        <dbReference type="HAMAP-Rule" id="MF_00156"/>
    </source>
</evidence>
<name>PANB_IGNH4</name>
<keyword id="KW-0173">Coenzyme A biosynthesis</keyword>
<keyword id="KW-0963">Cytoplasm</keyword>
<keyword id="KW-0460">Magnesium</keyword>
<keyword id="KW-0479">Metal-binding</keyword>
<keyword id="KW-1185">Reference proteome</keyword>
<keyword id="KW-0808">Transferase</keyword>
<feature type="chain" id="PRO_1000118128" description="3-methyl-2-oxobutanoate hydroxymethyltransferase">
    <location>
        <begin position="1"/>
        <end position="263"/>
    </location>
</feature>
<feature type="active site" description="Proton acceptor" evidence="1">
    <location>
        <position position="182"/>
    </location>
</feature>
<feature type="binding site" evidence="1">
    <location>
        <begin position="45"/>
        <end position="46"/>
    </location>
    <ligand>
        <name>3-methyl-2-oxobutanoate</name>
        <dbReference type="ChEBI" id="CHEBI:11851"/>
    </ligand>
</feature>
<feature type="binding site" evidence="1">
    <location>
        <position position="45"/>
    </location>
    <ligand>
        <name>Mg(2+)</name>
        <dbReference type="ChEBI" id="CHEBI:18420"/>
    </ligand>
</feature>
<feature type="binding site" evidence="1">
    <location>
        <position position="84"/>
    </location>
    <ligand>
        <name>3-methyl-2-oxobutanoate</name>
        <dbReference type="ChEBI" id="CHEBI:11851"/>
    </ligand>
</feature>
<feature type="binding site" evidence="1">
    <location>
        <position position="84"/>
    </location>
    <ligand>
        <name>Mg(2+)</name>
        <dbReference type="ChEBI" id="CHEBI:18420"/>
    </ligand>
</feature>
<feature type="binding site" evidence="1">
    <location>
        <position position="113"/>
    </location>
    <ligand>
        <name>3-methyl-2-oxobutanoate</name>
        <dbReference type="ChEBI" id="CHEBI:11851"/>
    </ligand>
</feature>
<feature type="binding site" evidence="1">
    <location>
        <position position="115"/>
    </location>
    <ligand>
        <name>Mg(2+)</name>
        <dbReference type="ChEBI" id="CHEBI:18420"/>
    </ligand>
</feature>
<accession>A8A9H3</accession>
<sequence>MKKVTIRDIMKKYKNGEKIVMVTAYDYPFAKLVDEAGVDMILVGDSLGMVVLGYPSTNQVTMKDMLHHVAAVARANPKAMIVGDMPFGSYEVSEEEAVRNAVELVRAGAEAVKLEGGKEVADKVEAIVKAGIPVMGHLGLTPQKRHALGGYRLRGKTEEEARELLEDAKALEEAGVFSIVLEFVKAEVAKKITEEVGVPTICIGAGPWCSGQVLVIHDILGLAPFSPPFAKKYFDCGKAIVEAVKKFAEEVRSGEFPGEGYYW</sequence>
<gene>
    <name evidence="1" type="primary">panB</name>
    <name type="ordered locus">Igni_0392</name>
</gene>
<proteinExistence type="inferred from homology"/>
<protein>
    <recommendedName>
        <fullName evidence="1">3-methyl-2-oxobutanoate hydroxymethyltransferase</fullName>
        <ecNumber evidence="1">2.1.2.11</ecNumber>
    </recommendedName>
    <alternativeName>
        <fullName evidence="1">Ketopantoate hydroxymethyltransferase</fullName>
        <shortName evidence="1">KPHMT</shortName>
    </alternativeName>
</protein>
<dbReference type="EC" id="2.1.2.11" evidence="1"/>
<dbReference type="EMBL" id="CP000816">
    <property type="protein sequence ID" value="ABU81575.1"/>
    <property type="molecule type" value="Genomic_DNA"/>
</dbReference>
<dbReference type="RefSeq" id="WP_011998427.1">
    <property type="nucleotide sequence ID" value="NC_009776.1"/>
</dbReference>
<dbReference type="SMR" id="A8A9H3"/>
<dbReference type="STRING" id="453591.Igni_0392"/>
<dbReference type="GeneID" id="5562368"/>
<dbReference type="KEGG" id="iho:Igni_0392"/>
<dbReference type="eggNOG" id="arCOG00584">
    <property type="taxonomic scope" value="Archaea"/>
</dbReference>
<dbReference type="HOGENOM" id="CLU_036645_1_0_2"/>
<dbReference type="OrthoDB" id="8414at2157"/>
<dbReference type="PhylomeDB" id="A8A9H3"/>
<dbReference type="UniPathway" id="UPA00241"/>
<dbReference type="Proteomes" id="UP000000262">
    <property type="component" value="Chromosome"/>
</dbReference>
<dbReference type="GO" id="GO:0005737">
    <property type="term" value="C:cytoplasm"/>
    <property type="evidence" value="ECO:0007669"/>
    <property type="project" value="UniProtKB-SubCell"/>
</dbReference>
<dbReference type="GO" id="GO:0003864">
    <property type="term" value="F:3-methyl-2-oxobutanoate hydroxymethyltransferase activity"/>
    <property type="evidence" value="ECO:0007669"/>
    <property type="project" value="UniProtKB-UniRule"/>
</dbReference>
<dbReference type="GO" id="GO:0000287">
    <property type="term" value="F:magnesium ion binding"/>
    <property type="evidence" value="ECO:0007669"/>
    <property type="project" value="TreeGrafter"/>
</dbReference>
<dbReference type="GO" id="GO:0015937">
    <property type="term" value="P:coenzyme A biosynthetic process"/>
    <property type="evidence" value="ECO:0007669"/>
    <property type="project" value="UniProtKB-UniRule"/>
</dbReference>
<dbReference type="GO" id="GO:0015940">
    <property type="term" value="P:pantothenate biosynthetic process"/>
    <property type="evidence" value="ECO:0007669"/>
    <property type="project" value="InterPro"/>
</dbReference>
<dbReference type="CDD" id="cd06557">
    <property type="entry name" value="KPHMT-like"/>
    <property type="match status" value="1"/>
</dbReference>
<dbReference type="FunFam" id="3.20.20.60:FF:000003">
    <property type="entry name" value="3-methyl-2-oxobutanoate hydroxymethyltransferase"/>
    <property type="match status" value="1"/>
</dbReference>
<dbReference type="Gene3D" id="3.20.20.60">
    <property type="entry name" value="Phosphoenolpyruvate-binding domains"/>
    <property type="match status" value="1"/>
</dbReference>
<dbReference type="HAMAP" id="MF_00156">
    <property type="entry name" value="PanB"/>
    <property type="match status" value="1"/>
</dbReference>
<dbReference type="InterPro" id="IPR003700">
    <property type="entry name" value="Pantoate_hydroxy_MeTrfase"/>
</dbReference>
<dbReference type="InterPro" id="IPR015813">
    <property type="entry name" value="Pyrv/PenolPyrv_kinase-like_dom"/>
</dbReference>
<dbReference type="InterPro" id="IPR040442">
    <property type="entry name" value="Pyrv_kinase-like_dom_sf"/>
</dbReference>
<dbReference type="NCBIfam" id="TIGR00222">
    <property type="entry name" value="panB"/>
    <property type="match status" value="1"/>
</dbReference>
<dbReference type="NCBIfam" id="NF001452">
    <property type="entry name" value="PRK00311.1"/>
    <property type="match status" value="1"/>
</dbReference>
<dbReference type="PANTHER" id="PTHR20881">
    <property type="entry name" value="3-METHYL-2-OXOBUTANOATE HYDROXYMETHYLTRANSFERASE"/>
    <property type="match status" value="1"/>
</dbReference>
<dbReference type="PANTHER" id="PTHR20881:SF0">
    <property type="entry name" value="3-METHYL-2-OXOBUTANOATE HYDROXYMETHYLTRANSFERASE"/>
    <property type="match status" value="1"/>
</dbReference>
<dbReference type="Pfam" id="PF02548">
    <property type="entry name" value="Pantoate_transf"/>
    <property type="match status" value="1"/>
</dbReference>
<dbReference type="PIRSF" id="PIRSF000388">
    <property type="entry name" value="Pantoate_hydroxy_MeTrfase"/>
    <property type="match status" value="1"/>
</dbReference>
<dbReference type="SUPFAM" id="SSF51621">
    <property type="entry name" value="Phosphoenolpyruvate/pyruvate domain"/>
    <property type="match status" value="1"/>
</dbReference>
<reference key="1">
    <citation type="journal article" date="2008" name="Genome Biol.">
        <title>A genomic analysis of the archaeal system Ignicoccus hospitalis-Nanoarchaeum equitans.</title>
        <authorList>
            <person name="Podar M."/>
            <person name="Anderson I."/>
            <person name="Makarova K.S."/>
            <person name="Elkins J.G."/>
            <person name="Ivanova N."/>
            <person name="Wall M.A."/>
            <person name="Lykidis A."/>
            <person name="Mavromatis K."/>
            <person name="Sun H."/>
            <person name="Hudson M.E."/>
            <person name="Chen W."/>
            <person name="Deciu C."/>
            <person name="Hutchison D."/>
            <person name="Eads J.R."/>
            <person name="Anderson A."/>
            <person name="Fernandes F."/>
            <person name="Szeto E."/>
            <person name="Lapidus A."/>
            <person name="Kyrpides N.C."/>
            <person name="Saier M.H. Jr."/>
            <person name="Richardson P.M."/>
            <person name="Rachel R."/>
            <person name="Huber H."/>
            <person name="Eisen J.A."/>
            <person name="Koonin E.V."/>
            <person name="Keller M."/>
            <person name="Stetter K.O."/>
        </authorList>
    </citation>
    <scope>NUCLEOTIDE SEQUENCE [LARGE SCALE GENOMIC DNA]</scope>
    <source>
        <strain>KIN4/I / DSM 18386 / JCM 14125</strain>
    </source>
</reference>
<organism>
    <name type="scientific">Ignicoccus hospitalis (strain KIN4/I / DSM 18386 / JCM 14125)</name>
    <dbReference type="NCBI Taxonomy" id="453591"/>
    <lineage>
        <taxon>Archaea</taxon>
        <taxon>Thermoproteota</taxon>
        <taxon>Thermoprotei</taxon>
        <taxon>Desulfurococcales</taxon>
        <taxon>Desulfurococcaceae</taxon>
        <taxon>Ignicoccus</taxon>
    </lineage>
</organism>
<comment type="function">
    <text evidence="1">Catalyzes the reversible reaction in which hydroxymethyl group from 5,10-methylenetetrahydrofolate is transferred onto alpha-ketoisovalerate to form ketopantoate.</text>
</comment>
<comment type="catalytic activity">
    <reaction evidence="1">
        <text>3-methyl-2-oxobutanoate + (6R)-5,10-methylene-5,6,7,8-tetrahydrofolate + H2O = 2-dehydropantoate + (6S)-5,6,7,8-tetrahydrofolate</text>
        <dbReference type="Rhea" id="RHEA:11824"/>
        <dbReference type="ChEBI" id="CHEBI:11561"/>
        <dbReference type="ChEBI" id="CHEBI:11851"/>
        <dbReference type="ChEBI" id="CHEBI:15377"/>
        <dbReference type="ChEBI" id="CHEBI:15636"/>
        <dbReference type="ChEBI" id="CHEBI:57453"/>
        <dbReference type="EC" id="2.1.2.11"/>
    </reaction>
</comment>
<comment type="cofactor">
    <cofactor evidence="1">
        <name>Mg(2+)</name>
        <dbReference type="ChEBI" id="CHEBI:18420"/>
    </cofactor>
    <text evidence="1">Binds 1 Mg(2+) ion per subunit.</text>
</comment>
<comment type="pathway">
    <text evidence="1">Cofactor biosynthesis; coenzyme A biosynthesis.</text>
</comment>
<comment type="subunit">
    <text evidence="1">Homodecamer; pentamer of dimers.</text>
</comment>
<comment type="subcellular location">
    <subcellularLocation>
        <location evidence="1">Cytoplasm</location>
    </subcellularLocation>
</comment>
<comment type="similarity">
    <text evidence="1">Belongs to the PanB family.</text>
</comment>